<feature type="chain" id="PRO_0000111331" description="Small ribosomal subunit protein uS9">
    <location>
        <begin position="1"/>
        <end position="130"/>
    </location>
</feature>
<proteinExistence type="inferred from homology"/>
<name>RS9_BORPE</name>
<dbReference type="EMBL" id="BX640420">
    <property type="protein sequence ID" value="CAE43233.1"/>
    <property type="molecule type" value="Genomic_DNA"/>
</dbReference>
<dbReference type="RefSeq" id="NP_881540.1">
    <property type="nucleotide sequence ID" value="NC_002929.2"/>
</dbReference>
<dbReference type="RefSeq" id="WP_010931224.1">
    <property type="nucleotide sequence ID" value="NZ_CP039022.1"/>
</dbReference>
<dbReference type="SMR" id="Q7VUV9"/>
<dbReference type="STRING" id="257313.BP2961"/>
<dbReference type="PaxDb" id="257313-BP2961"/>
<dbReference type="GeneID" id="69602886"/>
<dbReference type="KEGG" id="bpe:BP2961"/>
<dbReference type="PATRIC" id="fig|257313.5.peg.3203"/>
<dbReference type="eggNOG" id="COG0103">
    <property type="taxonomic scope" value="Bacteria"/>
</dbReference>
<dbReference type="HOGENOM" id="CLU_046483_2_1_4"/>
<dbReference type="Proteomes" id="UP000002676">
    <property type="component" value="Chromosome"/>
</dbReference>
<dbReference type="GO" id="GO:0022627">
    <property type="term" value="C:cytosolic small ribosomal subunit"/>
    <property type="evidence" value="ECO:0007669"/>
    <property type="project" value="TreeGrafter"/>
</dbReference>
<dbReference type="GO" id="GO:0003723">
    <property type="term" value="F:RNA binding"/>
    <property type="evidence" value="ECO:0007669"/>
    <property type="project" value="TreeGrafter"/>
</dbReference>
<dbReference type="GO" id="GO:0003735">
    <property type="term" value="F:structural constituent of ribosome"/>
    <property type="evidence" value="ECO:0007669"/>
    <property type="project" value="InterPro"/>
</dbReference>
<dbReference type="GO" id="GO:0006412">
    <property type="term" value="P:translation"/>
    <property type="evidence" value="ECO:0007669"/>
    <property type="project" value="UniProtKB-UniRule"/>
</dbReference>
<dbReference type="FunFam" id="3.30.230.10:FF:000001">
    <property type="entry name" value="30S ribosomal protein S9"/>
    <property type="match status" value="1"/>
</dbReference>
<dbReference type="Gene3D" id="3.30.230.10">
    <property type="match status" value="1"/>
</dbReference>
<dbReference type="HAMAP" id="MF_00532_B">
    <property type="entry name" value="Ribosomal_uS9_B"/>
    <property type="match status" value="1"/>
</dbReference>
<dbReference type="InterPro" id="IPR020568">
    <property type="entry name" value="Ribosomal_Su5_D2-typ_SF"/>
</dbReference>
<dbReference type="InterPro" id="IPR000754">
    <property type="entry name" value="Ribosomal_uS9"/>
</dbReference>
<dbReference type="InterPro" id="IPR023035">
    <property type="entry name" value="Ribosomal_uS9_bac/plastid"/>
</dbReference>
<dbReference type="InterPro" id="IPR020574">
    <property type="entry name" value="Ribosomal_uS9_CS"/>
</dbReference>
<dbReference type="InterPro" id="IPR014721">
    <property type="entry name" value="Ribsml_uS5_D2-typ_fold_subgr"/>
</dbReference>
<dbReference type="NCBIfam" id="NF001099">
    <property type="entry name" value="PRK00132.1"/>
    <property type="match status" value="1"/>
</dbReference>
<dbReference type="PANTHER" id="PTHR21569">
    <property type="entry name" value="RIBOSOMAL PROTEIN S9"/>
    <property type="match status" value="1"/>
</dbReference>
<dbReference type="PANTHER" id="PTHR21569:SF1">
    <property type="entry name" value="SMALL RIBOSOMAL SUBUNIT PROTEIN US9M"/>
    <property type="match status" value="1"/>
</dbReference>
<dbReference type="Pfam" id="PF00380">
    <property type="entry name" value="Ribosomal_S9"/>
    <property type="match status" value="1"/>
</dbReference>
<dbReference type="SUPFAM" id="SSF54211">
    <property type="entry name" value="Ribosomal protein S5 domain 2-like"/>
    <property type="match status" value="1"/>
</dbReference>
<dbReference type="PROSITE" id="PS00360">
    <property type="entry name" value="RIBOSOMAL_S9"/>
    <property type="match status" value="1"/>
</dbReference>
<accession>Q7VUV9</accession>
<organism>
    <name type="scientific">Bordetella pertussis (strain Tohama I / ATCC BAA-589 / NCTC 13251)</name>
    <dbReference type="NCBI Taxonomy" id="257313"/>
    <lineage>
        <taxon>Bacteria</taxon>
        <taxon>Pseudomonadati</taxon>
        <taxon>Pseudomonadota</taxon>
        <taxon>Betaproteobacteria</taxon>
        <taxon>Burkholderiales</taxon>
        <taxon>Alcaligenaceae</taxon>
        <taxon>Bordetella</taxon>
    </lineage>
</organism>
<sequence>MIGNWNYGTGRRKTSVARVFIKKGSGKIVVNGKPVDEFFARETGRMIVHQPLELTGHLESFDIKVNVHGGGETGQAGAVRHGITRALIDYDAALKPALSQAGFVTRDAREVERKKVGFRKARRRKQFSKR</sequence>
<keyword id="KW-1185">Reference proteome</keyword>
<keyword id="KW-0687">Ribonucleoprotein</keyword>
<keyword id="KW-0689">Ribosomal protein</keyword>
<comment type="similarity">
    <text evidence="1">Belongs to the universal ribosomal protein uS9 family.</text>
</comment>
<gene>
    <name evidence="1" type="primary">rpsI</name>
    <name type="ordered locus">BP2961</name>
</gene>
<reference key="1">
    <citation type="journal article" date="2003" name="Nat. Genet.">
        <title>Comparative analysis of the genome sequences of Bordetella pertussis, Bordetella parapertussis and Bordetella bronchiseptica.</title>
        <authorList>
            <person name="Parkhill J."/>
            <person name="Sebaihia M."/>
            <person name="Preston A."/>
            <person name="Murphy L.D."/>
            <person name="Thomson N.R."/>
            <person name="Harris D.E."/>
            <person name="Holden M.T.G."/>
            <person name="Churcher C.M."/>
            <person name="Bentley S.D."/>
            <person name="Mungall K.L."/>
            <person name="Cerdeno-Tarraga A.-M."/>
            <person name="Temple L."/>
            <person name="James K.D."/>
            <person name="Harris B."/>
            <person name="Quail M.A."/>
            <person name="Achtman M."/>
            <person name="Atkin R."/>
            <person name="Baker S."/>
            <person name="Basham D."/>
            <person name="Bason N."/>
            <person name="Cherevach I."/>
            <person name="Chillingworth T."/>
            <person name="Collins M."/>
            <person name="Cronin A."/>
            <person name="Davis P."/>
            <person name="Doggett J."/>
            <person name="Feltwell T."/>
            <person name="Goble A."/>
            <person name="Hamlin N."/>
            <person name="Hauser H."/>
            <person name="Holroyd S."/>
            <person name="Jagels K."/>
            <person name="Leather S."/>
            <person name="Moule S."/>
            <person name="Norberczak H."/>
            <person name="O'Neil S."/>
            <person name="Ormond D."/>
            <person name="Price C."/>
            <person name="Rabbinowitsch E."/>
            <person name="Rutter S."/>
            <person name="Sanders M."/>
            <person name="Saunders D."/>
            <person name="Seeger K."/>
            <person name="Sharp S."/>
            <person name="Simmonds M."/>
            <person name="Skelton J."/>
            <person name="Squares R."/>
            <person name="Squares S."/>
            <person name="Stevens K."/>
            <person name="Unwin L."/>
            <person name="Whitehead S."/>
            <person name="Barrell B.G."/>
            <person name="Maskell D.J."/>
        </authorList>
    </citation>
    <scope>NUCLEOTIDE SEQUENCE [LARGE SCALE GENOMIC DNA]</scope>
    <source>
        <strain>Tohama I / ATCC BAA-589 / NCTC 13251</strain>
    </source>
</reference>
<evidence type="ECO:0000255" key="1">
    <source>
        <dbReference type="HAMAP-Rule" id="MF_00532"/>
    </source>
</evidence>
<evidence type="ECO:0000305" key="2"/>
<protein>
    <recommendedName>
        <fullName evidence="1">Small ribosomal subunit protein uS9</fullName>
    </recommendedName>
    <alternativeName>
        <fullName evidence="2">30S ribosomal protein S9</fullName>
    </alternativeName>
</protein>